<name>RPO10_METM7</name>
<comment type="function">
    <text evidence="1">DNA-dependent RNA polymerase (RNAP) catalyzes the transcription of DNA into RNA using the four ribonucleoside triphosphates as substrates.</text>
</comment>
<comment type="catalytic activity">
    <reaction evidence="1">
        <text>RNA(n) + a ribonucleoside 5'-triphosphate = RNA(n+1) + diphosphate</text>
        <dbReference type="Rhea" id="RHEA:21248"/>
        <dbReference type="Rhea" id="RHEA-COMP:14527"/>
        <dbReference type="Rhea" id="RHEA-COMP:17342"/>
        <dbReference type="ChEBI" id="CHEBI:33019"/>
        <dbReference type="ChEBI" id="CHEBI:61557"/>
        <dbReference type="ChEBI" id="CHEBI:140395"/>
        <dbReference type="EC" id="2.7.7.6"/>
    </reaction>
</comment>
<comment type="cofactor">
    <cofactor evidence="1">
        <name>Zn(2+)</name>
        <dbReference type="ChEBI" id="CHEBI:29105"/>
    </cofactor>
    <text evidence="1">Binds 1 zinc ion.</text>
</comment>
<comment type="subunit">
    <text evidence="1">Part of the RNA polymerase complex.</text>
</comment>
<comment type="subcellular location">
    <subcellularLocation>
        <location evidence="1">Cytoplasm</location>
    </subcellularLocation>
</comment>
<comment type="similarity">
    <text evidence="1">Belongs to the archaeal Rpo10/eukaryotic RPB10 RNA polymerase subunit family.</text>
</comment>
<proteinExistence type="inferred from homology"/>
<reference key="1">
    <citation type="submission" date="2007-06" db="EMBL/GenBank/DDBJ databases">
        <title>Complete sequence of Methanococcus maripaludis C7.</title>
        <authorList>
            <consortium name="US DOE Joint Genome Institute"/>
            <person name="Copeland A."/>
            <person name="Lucas S."/>
            <person name="Lapidus A."/>
            <person name="Barry K."/>
            <person name="Glavina del Rio T."/>
            <person name="Dalin E."/>
            <person name="Tice H."/>
            <person name="Pitluck S."/>
            <person name="Clum A."/>
            <person name="Schmutz J."/>
            <person name="Larimer F."/>
            <person name="Land M."/>
            <person name="Hauser L."/>
            <person name="Kyrpides N."/>
            <person name="Anderson I."/>
            <person name="Sieprawska-Lupa M."/>
            <person name="Whitman W.B."/>
            <person name="Richardson P."/>
        </authorList>
    </citation>
    <scope>NUCLEOTIDE SEQUENCE [LARGE SCALE GENOMIC DNA]</scope>
    <source>
        <strain>C7 / ATCC BAA-1331</strain>
    </source>
</reference>
<feature type="chain" id="PRO_1000005778" description="DNA-directed RNA polymerase subunit Rpo10">
    <location>
        <begin position="1"/>
        <end position="68"/>
    </location>
</feature>
<feature type="binding site" evidence="1">
    <location>
        <position position="7"/>
    </location>
    <ligand>
        <name>Zn(2+)</name>
        <dbReference type="ChEBI" id="CHEBI:29105"/>
    </ligand>
</feature>
<feature type="binding site" evidence="1">
    <location>
        <position position="10"/>
    </location>
    <ligand>
        <name>Zn(2+)</name>
        <dbReference type="ChEBI" id="CHEBI:29105"/>
    </ligand>
</feature>
<feature type="binding site" evidence="1">
    <location>
        <position position="44"/>
    </location>
    <ligand>
        <name>Zn(2+)</name>
        <dbReference type="ChEBI" id="CHEBI:29105"/>
    </ligand>
</feature>
<feature type="binding site" evidence="1">
    <location>
        <position position="45"/>
    </location>
    <ligand>
        <name>Zn(2+)</name>
        <dbReference type="ChEBI" id="CHEBI:29105"/>
    </ligand>
</feature>
<evidence type="ECO:0000255" key="1">
    <source>
        <dbReference type="HAMAP-Rule" id="MF_00250"/>
    </source>
</evidence>
<gene>
    <name evidence="1" type="primary">rpo10</name>
    <name evidence="1" type="synonym">rpoN</name>
    <name type="ordered locus">MmarC7_0571</name>
</gene>
<organism>
    <name type="scientific">Methanococcus maripaludis (strain C7 / ATCC BAA-1331)</name>
    <dbReference type="NCBI Taxonomy" id="426368"/>
    <lineage>
        <taxon>Archaea</taxon>
        <taxon>Methanobacteriati</taxon>
        <taxon>Methanobacteriota</taxon>
        <taxon>Methanomada group</taxon>
        <taxon>Methanococci</taxon>
        <taxon>Methanococcales</taxon>
        <taxon>Methanococcaceae</taxon>
        <taxon>Methanococcus</taxon>
    </lineage>
</organism>
<protein>
    <recommendedName>
        <fullName evidence="1">DNA-directed RNA polymerase subunit Rpo10</fullName>
        <ecNumber evidence="1">2.7.7.6</ecNumber>
    </recommendedName>
    <alternativeName>
        <fullName evidence="1">DNA-directed RNA polymerase subunit N</fullName>
    </alternativeName>
</protein>
<keyword id="KW-0963">Cytoplasm</keyword>
<keyword id="KW-0240">DNA-directed RNA polymerase</keyword>
<keyword id="KW-0479">Metal-binding</keyword>
<keyword id="KW-0548">Nucleotidyltransferase</keyword>
<keyword id="KW-0804">Transcription</keyword>
<keyword id="KW-0808">Transferase</keyword>
<keyword id="KW-0862">Zinc</keyword>
<accession>A6VGR3</accession>
<dbReference type="EC" id="2.7.7.6" evidence="1"/>
<dbReference type="EMBL" id="CP000745">
    <property type="protein sequence ID" value="ABR65639.1"/>
    <property type="molecule type" value="Genomic_DNA"/>
</dbReference>
<dbReference type="SMR" id="A6VGR3"/>
<dbReference type="STRING" id="426368.MmarC7_0571"/>
<dbReference type="KEGG" id="mmz:MmarC7_0571"/>
<dbReference type="eggNOG" id="arCOG04244">
    <property type="taxonomic scope" value="Archaea"/>
</dbReference>
<dbReference type="HOGENOM" id="CLU_143122_2_1_2"/>
<dbReference type="OrthoDB" id="371754at2157"/>
<dbReference type="GO" id="GO:0005737">
    <property type="term" value="C:cytoplasm"/>
    <property type="evidence" value="ECO:0007669"/>
    <property type="project" value="UniProtKB-SubCell"/>
</dbReference>
<dbReference type="GO" id="GO:0000428">
    <property type="term" value="C:DNA-directed RNA polymerase complex"/>
    <property type="evidence" value="ECO:0007669"/>
    <property type="project" value="UniProtKB-KW"/>
</dbReference>
<dbReference type="GO" id="GO:0003677">
    <property type="term" value="F:DNA binding"/>
    <property type="evidence" value="ECO:0007669"/>
    <property type="project" value="InterPro"/>
</dbReference>
<dbReference type="GO" id="GO:0003899">
    <property type="term" value="F:DNA-directed RNA polymerase activity"/>
    <property type="evidence" value="ECO:0007669"/>
    <property type="project" value="UniProtKB-UniRule"/>
</dbReference>
<dbReference type="GO" id="GO:0008270">
    <property type="term" value="F:zinc ion binding"/>
    <property type="evidence" value="ECO:0007669"/>
    <property type="project" value="UniProtKB-UniRule"/>
</dbReference>
<dbReference type="GO" id="GO:0006351">
    <property type="term" value="P:DNA-templated transcription"/>
    <property type="evidence" value="ECO:0007669"/>
    <property type="project" value="UniProtKB-UniRule"/>
</dbReference>
<dbReference type="Gene3D" id="1.10.10.60">
    <property type="entry name" value="Homeodomain-like"/>
    <property type="match status" value="1"/>
</dbReference>
<dbReference type="HAMAP" id="MF_00250">
    <property type="entry name" value="RNApol_arch_Rpo10"/>
    <property type="match status" value="1"/>
</dbReference>
<dbReference type="InterPro" id="IPR023580">
    <property type="entry name" value="RNA_pol_su_RPB10"/>
</dbReference>
<dbReference type="InterPro" id="IPR020789">
    <property type="entry name" value="RNA_pol_suN_Zn-BS"/>
</dbReference>
<dbReference type="InterPro" id="IPR000268">
    <property type="entry name" value="RPABC5/Rpb10"/>
</dbReference>
<dbReference type="NCBIfam" id="NF003089">
    <property type="entry name" value="PRK04016.1"/>
    <property type="match status" value="1"/>
</dbReference>
<dbReference type="PANTHER" id="PTHR23431:SF3">
    <property type="entry name" value="DNA-DIRECTED RNA POLYMERASES I, II, AND III SUBUNIT RPABC5"/>
    <property type="match status" value="1"/>
</dbReference>
<dbReference type="PANTHER" id="PTHR23431">
    <property type="entry name" value="DNA-DIRECTED RNA POLYMERASES I, II, AND III SUBUNIT RPABC5 FAMILY MEMBER"/>
    <property type="match status" value="1"/>
</dbReference>
<dbReference type="Pfam" id="PF01194">
    <property type="entry name" value="RNA_pol_N"/>
    <property type="match status" value="1"/>
</dbReference>
<dbReference type="PIRSF" id="PIRSF005653">
    <property type="entry name" value="RNA_pol_N/8_sub"/>
    <property type="match status" value="1"/>
</dbReference>
<dbReference type="SUPFAM" id="SSF46924">
    <property type="entry name" value="RNA polymerase subunit RPB10"/>
    <property type="match status" value="1"/>
</dbReference>
<dbReference type="PROSITE" id="PS01112">
    <property type="entry name" value="RNA_POL_N_8KD"/>
    <property type="match status" value="1"/>
</dbReference>
<sequence length="68" mass="8213">MIFPIRCFSCGAVISEVYEEYRTRLKDGENPEEILNDLEVKKYCCRRMFASHRLDNDRELFDDIVEYK</sequence>